<keyword id="KW-0378">Hydrolase</keyword>
<keyword id="KW-0479">Metal-binding</keyword>
<keyword id="KW-0665">Pyrimidine biosynthesis</keyword>
<keyword id="KW-0862">Zinc</keyword>
<sequence length="425" mass="46053">MTTVIKNGTVYQNGHLIKADVLIDGQKIKAIGTDLEGEEIIDASGMIVSPGLVDVHVHYRDPGQTYKEDIKTGSQAAARGGFTTVGAMPNVTPVPNTAELMDKMVRENQKKGLVHILQYGPVTNDETTDIIPDYAALKKAGAFALSNDGHGVQSAQTMYLAMQKAKENNLIIAAHAQDDSLFNKGIVNEGIAAEKLDLPPVTELAETTQIARDLLLAQKTGVHYHICHVSTKTSVELVRLAKARGIKVTCEVAPHHILLTDSDIPEDNAYFKMNPPLRSKEDQVALLVGLLDGTIDLIATDHAPHAKAEKQGGMRGAAFGITGSETAFSTLYTRFVKEEKVFTLEQLLSLLTDKPATVFGIENAGLLAPGENADIAIFDIEHQREIKEDDFKSKGVNTPFTGHKVYGETVMTFVDGKVVYQRGTK</sequence>
<accession>Q74J32</accession>
<name>PYRC_LACJO</name>
<feature type="chain" id="PRO_1000024090" description="Dihydroorotase">
    <location>
        <begin position="1"/>
        <end position="425"/>
    </location>
</feature>
<feature type="active site" evidence="1">
    <location>
        <position position="301"/>
    </location>
</feature>
<feature type="binding site" evidence="1">
    <location>
        <position position="56"/>
    </location>
    <ligand>
        <name>Zn(2+)</name>
        <dbReference type="ChEBI" id="CHEBI:29105"/>
        <label>1</label>
    </ligand>
</feature>
<feature type="binding site" evidence="1">
    <location>
        <begin position="58"/>
        <end position="60"/>
    </location>
    <ligand>
        <name>substrate</name>
    </ligand>
</feature>
<feature type="binding site" evidence="1">
    <location>
        <position position="58"/>
    </location>
    <ligand>
        <name>Zn(2+)</name>
        <dbReference type="ChEBI" id="CHEBI:29105"/>
        <label>1</label>
    </ligand>
</feature>
<feature type="binding site" evidence="1">
    <location>
        <position position="90"/>
    </location>
    <ligand>
        <name>substrate</name>
    </ligand>
</feature>
<feature type="binding site" evidence="1">
    <location>
        <position position="148"/>
    </location>
    <ligand>
        <name>Zn(2+)</name>
        <dbReference type="ChEBI" id="CHEBI:29105"/>
        <label>1</label>
    </ligand>
</feature>
<feature type="binding site" evidence="1">
    <location>
        <position position="148"/>
    </location>
    <ligand>
        <name>Zn(2+)</name>
        <dbReference type="ChEBI" id="CHEBI:29105"/>
        <label>2</label>
    </ligand>
</feature>
<feature type="binding site" evidence="1">
    <location>
        <position position="175"/>
    </location>
    <ligand>
        <name>Zn(2+)</name>
        <dbReference type="ChEBI" id="CHEBI:29105"/>
        <label>2</label>
    </ligand>
</feature>
<feature type="binding site" evidence="1">
    <location>
        <position position="228"/>
    </location>
    <ligand>
        <name>Zn(2+)</name>
        <dbReference type="ChEBI" id="CHEBI:29105"/>
        <label>2</label>
    </ligand>
</feature>
<feature type="binding site" evidence="1">
    <location>
        <position position="274"/>
    </location>
    <ligand>
        <name>substrate</name>
    </ligand>
</feature>
<feature type="binding site" evidence="1">
    <location>
        <position position="301"/>
    </location>
    <ligand>
        <name>Zn(2+)</name>
        <dbReference type="ChEBI" id="CHEBI:29105"/>
        <label>1</label>
    </ligand>
</feature>
<feature type="binding site" evidence="1">
    <location>
        <position position="305"/>
    </location>
    <ligand>
        <name>substrate</name>
    </ligand>
</feature>
<feature type="binding site" evidence="1">
    <location>
        <begin position="319"/>
        <end position="320"/>
    </location>
    <ligand>
        <name>substrate</name>
    </ligand>
</feature>
<gene>
    <name evidence="1" type="primary">pyrC</name>
    <name type="ordered locus">LJ_1278</name>
</gene>
<evidence type="ECO:0000255" key="1">
    <source>
        <dbReference type="HAMAP-Rule" id="MF_00220"/>
    </source>
</evidence>
<proteinExistence type="inferred from homology"/>
<reference key="1">
    <citation type="journal article" date="2004" name="Proc. Natl. Acad. Sci. U.S.A.">
        <title>The genome sequence of the probiotic intestinal bacterium Lactobacillus johnsonii NCC 533.</title>
        <authorList>
            <person name="Pridmore R.D."/>
            <person name="Berger B."/>
            <person name="Desiere F."/>
            <person name="Vilanova D."/>
            <person name="Barretto C."/>
            <person name="Pittet A.-C."/>
            <person name="Zwahlen M.-C."/>
            <person name="Rouvet M."/>
            <person name="Altermann E."/>
            <person name="Barrangou R."/>
            <person name="Mollet B."/>
            <person name="Mercenier A."/>
            <person name="Klaenhammer T."/>
            <person name="Arigoni F."/>
            <person name="Schell M.A."/>
        </authorList>
    </citation>
    <scope>NUCLEOTIDE SEQUENCE [LARGE SCALE GENOMIC DNA]</scope>
    <source>
        <strain>CNCM I-1225 / La1 / NCC 533</strain>
    </source>
</reference>
<organism>
    <name type="scientific">Lactobacillus johnsonii (strain CNCM I-12250 / La1 / NCC 533)</name>
    <dbReference type="NCBI Taxonomy" id="257314"/>
    <lineage>
        <taxon>Bacteria</taxon>
        <taxon>Bacillati</taxon>
        <taxon>Bacillota</taxon>
        <taxon>Bacilli</taxon>
        <taxon>Lactobacillales</taxon>
        <taxon>Lactobacillaceae</taxon>
        <taxon>Lactobacillus</taxon>
    </lineage>
</organism>
<protein>
    <recommendedName>
        <fullName evidence="1">Dihydroorotase</fullName>
        <shortName evidence="1">DHOase</shortName>
        <ecNumber evidence="1">3.5.2.3</ecNumber>
    </recommendedName>
</protein>
<dbReference type="EC" id="3.5.2.3" evidence="1"/>
<dbReference type="EMBL" id="AE017198">
    <property type="protein sequence ID" value="AAS09099.1"/>
    <property type="molecule type" value="Genomic_DNA"/>
</dbReference>
<dbReference type="RefSeq" id="WP_011162105.1">
    <property type="nucleotide sequence ID" value="NC_005362.1"/>
</dbReference>
<dbReference type="SMR" id="Q74J32"/>
<dbReference type="GeneID" id="83570292"/>
<dbReference type="KEGG" id="ljo:LJ_1278"/>
<dbReference type="PATRIC" id="fig|257314.6.peg.1146"/>
<dbReference type="eggNOG" id="COG0044">
    <property type="taxonomic scope" value="Bacteria"/>
</dbReference>
<dbReference type="HOGENOM" id="CLU_015572_1_0_9"/>
<dbReference type="UniPathway" id="UPA00070">
    <property type="reaction ID" value="UER00117"/>
</dbReference>
<dbReference type="Proteomes" id="UP000000581">
    <property type="component" value="Chromosome"/>
</dbReference>
<dbReference type="GO" id="GO:0005737">
    <property type="term" value="C:cytoplasm"/>
    <property type="evidence" value="ECO:0007669"/>
    <property type="project" value="TreeGrafter"/>
</dbReference>
<dbReference type="GO" id="GO:0004038">
    <property type="term" value="F:allantoinase activity"/>
    <property type="evidence" value="ECO:0007669"/>
    <property type="project" value="TreeGrafter"/>
</dbReference>
<dbReference type="GO" id="GO:0004151">
    <property type="term" value="F:dihydroorotase activity"/>
    <property type="evidence" value="ECO:0007669"/>
    <property type="project" value="UniProtKB-UniRule"/>
</dbReference>
<dbReference type="GO" id="GO:0008270">
    <property type="term" value="F:zinc ion binding"/>
    <property type="evidence" value="ECO:0007669"/>
    <property type="project" value="UniProtKB-UniRule"/>
</dbReference>
<dbReference type="GO" id="GO:0044205">
    <property type="term" value="P:'de novo' UMP biosynthetic process"/>
    <property type="evidence" value="ECO:0007669"/>
    <property type="project" value="UniProtKB-UniRule"/>
</dbReference>
<dbReference type="GO" id="GO:0006145">
    <property type="term" value="P:purine nucleobase catabolic process"/>
    <property type="evidence" value="ECO:0007669"/>
    <property type="project" value="TreeGrafter"/>
</dbReference>
<dbReference type="CDD" id="cd01317">
    <property type="entry name" value="DHOase_IIa"/>
    <property type="match status" value="1"/>
</dbReference>
<dbReference type="Gene3D" id="3.20.20.140">
    <property type="entry name" value="Metal-dependent hydrolases"/>
    <property type="match status" value="1"/>
</dbReference>
<dbReference type="HAMAP" id="MF_00220_B">
    <property type="entry name" value="PyrC_classI_B"/>
    <property type="match status" value="1"/>
</dbReference>
<dbReference type="InterPro" id="IPR006680">
    <property type="entry name" value="Amidohydro-rel"/>
</dbReference>
<dbReference type="InterPro" id="IPR004722">
    <property type="entry name" value="DHOase"/>
</dbReference>
<dbReference type="InterPro" id="IPR050138">
    <property type="entry name" value="DHOase/Allantoinase_Hydrolase"/>
</dbReference>
<dbReference type="InterPro" id="IPR002195">
    <property type="entry name" value="Dihydroorotase_CS"/>
</dbReference>
<dbReference type="InterPro" id="IPR011059">
    <property type="entry name" value="Metal-dep_hydrolase_composite"/>
</dbReference>
<dbReference type="InterPro" id="IPR032466">
    <property type="entry name" value="Metal_Hydrolase"/>
</dbReference>
<dbReference type="NCBIfam" id="NF006837">
    <property type="entry name" value="PRK09357.1-2"/>
    <property type="match status" value="1"/>
</dbReference>
<dbReference type="NCBIfam" id="TIGR00857">
    <property type="entry name" value="pyrC_multi"/>
    <property type="match status" value="1"/>
</dbReference>
<dbReference type="PANTHER" id="PTHR43668">
    <property type="entry name" value="ALLANTOINASE"/>
    <property type="match status" value="1"/>
</dbReference>
<dbReference type="PANTHER" id="PTHR43668:SF2">
    <property type="entry name" value="ALLANTOINASE"/>
    <property type="match status" value="1"/>
</dbReference>
<dbReference type="Pfam" id="PF01979">
    <property type="entry name" value="Amidohydro_1"/>
    <property type="match status" value="1"/>
</dbReference>
<dbReference type="SUPFAM" id="SSF51338">
    <property type="entry name" value="Composite domain of metallo-dependent hydrolases"/>
    <property type="match status" value="1"/>
</dbReference>
<dbReference type="SUPFAM" id="SSF51556">
    <property type="entry name" value="Metallo-dependent hydrolases"/>
    <property type="match status" value="1"/>
</dbReference>
<dbReference type="PROSITE" id="PS00483">
    <property type="entry name" value="DIHYDROOROTASE_2"/>
    <property type="match status" value="1"/>
</dbReference>
<comment type="function">
    <text evidence="1">Catalyzes the reversible cyclization of carbamoyl aspartate to dihydroorotate.</text>
</comment>
<comment type="catalytic activity">
    <reaction evidence="1">
        <text>(S)-dihydroorotate + H2O = N-carbamoyl-L-aspartate + H(+)</text>
        <dbReference type="Rhea" id="RHEA:24296"/>
        <dbReference type="ChEBI" id="CHEBI:15377"/>
        <dbReference type="ChEBI" id="CHEBI:15378"/>
        <dbReference type="ChEBI" id="CHEBI:30864"/>
        <dbReference type="ChEBI" id="CHEBI:32814"/>
        <dbReference type="EC" id="3.5.2.3"/>
    </reaction>
</comment>
<comment type="cofactor">
    <cofactor evidence="1">
        <name>Zn(2+)</name>
        <dbReference type="ChEBI" id="CHEBI:29105"/>
    </cofactor>
    <text evidence="1">Binds 2 Zn(2+) ions per subunit.</text>
</comment>
<comment type="pathway">
    <text evidence="1">Pyrimidine metabolism; UMP biosynthesis via de novo pathway; (S)-dihydroorotate from bicarbonate: step 3/3.</text>
</comment>
<comment type="similarity">
    <text evidence="1">Belongs to the metallo-dependent hydrolases superfamily. DHOase family. Class I DHOase subfamily.</text>
</comment>